<gene>
    <name evidence="1" type="primary">truA</name>
    <name type="ordered locus">SPH_1711</name>
</gene>
<dbReference type="EC" id="5.4.99.12" evidence="1"/>
<dbReference type="EMBL" id="CP000936">
    <property type="protein sequence ID" value="ACA36497.1"/>
    <property type="molecule type" value="Genomic_DNA"/>
</dbReference>
<dbReference type="RefSeq" id="WP_000199207.1">
    <property type="nucleotide sequence ID" value="NC_010380.1"/>
</dbReference>
<dbReference type="SMR" id="B1ID11"/>
<dbReference type="KEGG" id="spv:SPH_1711"/>
<dbReference type="HOGENOM" id="CLU_014673_0_1_9"/>
<dbReference type="Proteomes" id="UP000002163">
    <property type="component" value="Chromosome"/>
</dbReference>
<dbReference type="GO" id="GO:0003723">
    <property type="term" value="F:RNA binding"/>
    <property type="evidence" value="ECO:0007669"/>
    <property type="project" value="InterPro"/>
</dbReference>
<dbReference type="GO" id="GO:0160147">
    <property type="term" value="F:tRNA pseudouridine(38-40) synthase activity"/>
    <property type="evidence" value="ECO:0007669"/>
    <property type="project" value="UniProtKB-EC"/>
</dbReference>
<dbReference type="GO" id="GO:0031119">
    <property type="term" value="P:tRNA pseudouridine synthesis"/>
    <property type="evidence" value="ECO:0007669"/>
    <property type="project" value="UniProtKB-UniRule"/>
</dbReference>
<dbReference type="CDD" id="cd02570">
    <property type="entry name" value="PseudoU_synth_EcTruA"/>
    <property type="match status" value="1"/>
</dbReference>
<dbReference type="FunFam" id="3.30.70.580:FF:000001">
    <property type="entry name" value="tRNA pseudouridine synthase A"/>
    <property type="match status" value="1"/>
</dbReference>
<dbReference type="FunFam" id="3.30.70.660:FF:000009">
    <property type="entry name" value="tRNA pseudouridine synthase A"/>
    <property type="match status" value="1"/>
</dbReference>
<dbReference type="Gene3D" id="3.30.70.660">
    <property type="entry name" value="Pseudouridine synthase I, catalytic domain, C-terminal subdomain"/>
    <property type="match status" value="1"/>
</dbReference>
<dbReference type="Gene3D" id="3.30.70.580">
    <property type="entry name" value="Pseudouridine synthase I, catalytic domain, N-terminal subdomain"/>
    <property type="match status" value="1"/>
</dbReference>
<dbReference type="HAMAP" id="MF_00171">
    <property type="entry name" value="TruA"/>
    <property type="match status" value="1"/>
</dbReference>
<dbReference type="InterPro" id="IPR020103">
    <property type="entry name" value="PsdUridine_synth_cat_dom_sf"/>
</dbReference>
<dbReference type="InterPro" id="IPR001406">
    <property type="entry name" value="PsdUridine_synth_TruA"/>
</dbReference>
<dbReference type="InterPro" id="IPR020097">
    <property type="entry name" value="PsdUridine_synth_TruA_a/b_dom"/>
</dbReference>
<dbReference type="InterPro" id="IPR020095">
    <property type="entry name" value="PsdUridine_synth_TruA_C"/>
</dbReference>
<dbReference type="InterPro" id="IPR020094">
    <property type="entry name" value="TruA/RsuA/RluB/E/F_N"/>
</dbReference>
<dbReference type="NCBIfam" id="TIGR00071">
    <property type="entry name" value="hisT_truA"/>
    <property type="match status" value="1"/>
</dbReference>
<dbReference type="PANTHER" id="PTHR11142">
    <property type="entry name" value="PSEUDOURIDYLATE SYNTHASE"/>
    <property type="match status" value="1"/>
</dbReference>
<dbReference type="PANTHER" id="PTHR11142:SF0">
    <property type="entry name" value="TRNA PSEUDOURIDINE SYNTHASE-LIKE 1"/>
    <property type="match status" value="1"/>
</dbReference>
<dbReference type="Pfam" id="PF01416">
    <property type="entry name" value="PseudoU_synth_1"/>
    <property type="match status" value="2"/>
</dbReference>
<dbReference type="PIRSF" id="PIRSF001430">
    <property type="entry name" value="tRNA_psdUrid_synth"/>
    <property type="match status" value="1"/>
</dbReference>
<dbReference type="SUPFAM" id="SSF55120">
    <property type="entry name" value="Pseudouridine synthase"/>
    <property type="match status" value="1"/>
</dbReference>
<name>TRUA_STRPI</name>
<proteinExistence type="inferred from homology"/>
<protein>
    <recommendedName>
        <fullName evidence="1">tRNA pseudouridine synthase A</fullName>
        <ecNumber evidence="1">5.4.99.12</ecNumber>
    </recommendedName>
    <alternativeName>
        <fullName evidence="1">tRNA pseudouridine(38-40) synthase</fullName>
    </alternativeName>
    <alternativeName>
        <fullName evidence="1">tRNA pseudouridylate synthase I</fullName>
    </alternativeName>
    <alternativeName>
        <fullName evidence="1">tRNA-uridine isomerase I</fullName>
    </alternativeName>
</protein>
<organism>
    <name type="scientific">Streptococcus pneumoniae (strain Hungary19A-6)</name>
    <dbReference type="NCBI Taxonomy" id="487214"/>
    <lineage>
        <taxon>Bacteria</taxon>
        <taxon>Bacillati</taxon>
        <taxon>Bacillota</taxon>
        <taxon>Bacilli</taxon>
        <taxon>Lactobacillales</taxon>
        <taxon>Streptococcaceae</taxon>
        <taxon>Streptococcus</taxon>
    </lineage>
</organism>
<accession>B1ID11</accession>
<feature type="chain" id="PRO_1000097792" description="tRNA pseudouridine synthase A">
    <location>
        <begin position="1"/>
        <end position="249"/>
    </location>
</feature>
<feature type="active site" description="Nucleophile" evidence="1">
    <location>
        <position position="53"/>
    </location>
</feature>
<feature type="binding site" evidence="1">
    <location>
        <position position="111"/>
    </location>
    <ligand>
        <name>substrate</name>
    </ligand>
</feature>
<sequence>MTRYKATISYDGYAFAGFQRQSHARSVQEEIEKTLTRLNKGQTITVHGAGRTDSGVHALGQVIHFDLPYQMDEEKLRFALDTQSPEDIDVISIELVADDFHCRYAKHSKTYEFIVDRGRPKNPMRRHYATHFPYPLDVERMQIAIKKLEGTHDFTGFTASGTSVEDKVRTITEASLIVDETGQFLTFTFSGNGFLYKQIRNMVGTLLKIGNNRMPVEQIDLILEKKDRQLAGPTAAPNGLYLKEIRYEE</sequence>
<reference key="1">
    <citation type="journal article" date="2010" name="Genome Biol.">
        <title>Structure and dynamics of the pan-genome of Streptococcus pneumoniae and closely related species.</title>
        <authorList>
            <person name="Donati C."/>
            <person name="Hiller N.L."/>
            <person name="Tettelin H."/>
            <person name="Muzzi A."/>
            <person name="Croucher N.J."/>
            <person name="Angiuoli S.V."/>
            <person name="Oggioni M."/>
            <person name="Dunning Hotopp J.C."/>
            <person name="Hu F.Z."/>
            <person name="Riley D.R."/>
            <person name="Covacci A."/>
            <person name="Mitchell T.J."/>
            <person name="Bentley S.D."/>
            <person name="Kilian M."/>
            <person name="Ehrlich G.D."/>
            <person name="Rappuoli R."/>
            <person name="Moxon E.R."/>
            <person name="Masignani V."/>
        </authorList>
    </citation>
    <scope>NUCLEOTIDE SEQUENCE [LARGE SCALE GENOMIC DNA]</scope>
    <source>
        <strain>Hungary19A-6</strain>
    </source>
</reference>
<evidence type="ECO:0000255" key="1">
    <source>
        <dbReference type="HAMAP-Rule" id="MF_00171"/>
    </source>
</evidence>
<comment type="function">
    <text evidence="1">Formation of pseudouridine at positions 38, 39 and 40 in the anticodon stem and loop of transfer RNAs.</text>
</comment>
<comment type="catalytic activity">
    <reaction evidence="1">
        <text>uridine(38/39/40) in tRNA = pseudouridine(38/39/40) in tRNA</text>
        <dbReference type="Rhea" id="RHEA:22376"/>
        <dbReference type="Rhea" id="RHEA-COMP:10085"/>
        <dbReference type="Rhea" id="RHEA-COMP:10087"/>
        <dbReference type="ChEBI" id="CHEBI:65314"/>
        <dbReference type="ChEBI" id="CHEBI:65315"/>
        <dbReference type="EC" id="5.4.99.12"/>
    </reaction>
</comment>
<comment type="subunit">
    <text evidence="1">Homodimer.</text>
</comment>
<comment type="similarity">
    <text evidence="1">Belongs to the tRNA pseudouridine synthase TruA family.</text>
</comment>
<keyword id="KW-0413">Isomerase</keyword>
<keyword id="KW-0819">tRNA processing</keyword>